<gene>
    <name type="primary">NS1</name>
</gene>
<feature type="chain" id="PRO_0000222468" description="Initiator protein NS1">
    <location>
        <begin position="1"/>
        <end position="672"/>
    </location>
</feature>
<feature type="domain" description="PV NS1-Nuc" evidence="5">
    <location>
        <begin position="21"/>
        <end position="259"/>
    </location>
</feature>
<feature type="domain" description="SF3 helicase" evidence="4">
    <location>
        <begin position="373"/>
        <end position="528"/>
    </location>
</feature>
<feature type="region of interest" description="DNA-binding" evidence="2">
    <location>
        <begin position="1"/>
        <end position="276"/>
    </location>
</feature>
<feature type="region of interest" description="Ori-binding" evidence="2">
    <location>
        <begin position="191"/>
        <end position="195"/>
    </location>
</feature>
<feature type="region of interest" description="Transactivation" evidence="2">
    <location>
        <begin position="543"/>
        <end position="672"/>
    </location>
</feature>
<feature type="region of interest" description="Disordered" evidence="6">
    <location>
        <begin position="615"/>
        <end position="643"/>
    </location>
</feature>
<feature type="short sequence motif" description="RCR-2" evidence="5">
    <location>
        <begin position="127"/>
        <end position="129"/>
    </location>
</feature>
<feature type="short sequence motif" description="RCR-3" evidence="5">
    <location>
        <begin position="210"/>
        <end position="214"/>
    </location>
</feature>
<feature type="active site" description="For nuclease activity" evidence="5">
    <location>
        <position position="210"/>
    </location>
</feature>
<feature type="binding site" evidence="5">
    <location>
        <position position="119"/>
    </location>
    <ligand>
        <name>a divalent metal cation</name>
        <dbReference type="ChEBI" id="CHEBI:60240"/>
    </ligand>
</feature>
<feature type="binding site" evidence="5">
    <location>
        <position position="127"/>
    </location>
    <ligand>
        <name>a divalent metal cation</name>
        <dbReference type="ChEBI" id="CHEBI:60240"/>
    </ligand>
</feature>
<feature type="binding site" evidence="5">
    <location>
        <position position="129"/>
    </location>
    <ligand>
        <name>a divalent metal cation</name>
        <dbReference type="ChEBI" id="CHEBI:60240"/>
    </ligand>
</feature>
<feature type="binding site" evidence="4">
    <location>
        <begin position="399"/>
        <end position="406"/>
    </location>
    <ligand>
        <name>ATP</name>
        <dbReference type="ChEBI" id="CHEBI:30616"/>
    </ligand>
</feature>
<organismHost>
    <name type="scientific">Cricetidae sp.</name>
    <name type="common">Hamster</name>
    <dbReference type="NCBI Taxonomy" id="36483"/>
</organismHost>
<organismHost>
    <name type="scientific">Rattus norvegicus</name>
    <name type="common">Rat</name>
    <dbReference type="NCBI Taxonomy" id="10116"/>
</organismHost>
<keyword id="KW-0067">ATP-binding</keyword>
<keyword id="KW-0190">Covalent protein-DNA linkage</keyword>
<keyword id="KW-0235">DNA replication</keyword>
<keyword id="KW-0238">DNA-binding</keyword>
<keyword id="KW-0255">Endonuclease</keyword>
<keyword id="KW-1078">G1/S host cell cycle checkpoint dysregulation by virus</keyword>
<keyword id="KW-0347">Helicase</keyword>
<keyword id="KW-1079">Host G2/M cell cycle arrest by virus</keyword>
<keyword id="KW-1048">Host nucleus</keyword>
<keyword id="KW-0945">Host-virus interaction</keyword>
<keyword id="KW-0378">Hydrolase</keyword>
<keyword id="KW-0460">Magnesium</keyword>
<keyword id="KW-0479">Metal-binding</keyword>
<keyword id="KW-1119">Modulation of host cell apoptosis by virus</keyword>
<keyword id="KW-1121">Modulation of host cell cycle by virus</keyword>
<keyword id="KW-0540">Nuclease</keyword>
<keyword id="KW-0547">Nucleotide-binding</keyword>
<keyword id="KW-0804">Transcription</keyword>
<keyword id="KW-0805">Transcription regulation</keyword>
<keyword id="KW-1194">Viral DNA replication</keyword>
<keyword id="KW-0231">Viral genome packaging</keyword>
<keyword id="KW-1188">Viral release from host cell</keyword>
<sequence>MAGNAYSDEVLGVTNWLKDKSSQEVFSFVFKNENVQLNGKDIGWNSYRKELQDDELKSLQRGAETTWDQSEDMEWESAVDDMTKKQVFIFDSLVKKCLFEVLSTKNIAPSNVTWFVQHEWGKDPGWHCHVLIGGKDFSQPQGKWWRRQLNVYWSRWLVTACNVQLTPAERIKLREIAEDSEWVTLLTYKHKHTKKDYTKCVLFGNMIAYYFLSKKKICTSPPRDGGYFLSSDSGWKTNFLKEGERHLVSKLYTDEMKPETVETTVTTAQEAKRGRIQTREEVSIKTTLKELVHKRVTSPEDWMMMQPDSYIEMMAQPGGENLLKNTLEICTLTLARTKTAFDLILEKAETSKLANFSMASTRTCRIFAEHGWNYIKVCHAICCVLNRQGGKRNTVLFHGPASTGKSIIAQAIAQAVGNVGCYNAANVNFPFNDCTNKNLIWVEEAGNFGQQVNQFKAICSGQTIRIDQKGKGSKQIEPTPVIMTTNENITVVRIGCEERPEHTQPIRDRMLNIHLTRTLPGDFGLVDKHEWPLICAWLVKNGYQSTMACYCAKWGKVPDWSEDWAEPKLDTPINSLGSMRSPSLTPRSTPLSQNYALTPLASDLADLALEPWSTPNTPVAGTAASQNTGEAGSTACQGAQRSPTWSEIEADLRACFSQEQLESDFNEELTLD</sequence>
<reference key="1">
    <citation type="journal article" date="1983" name="J. Virol.">
        <title>Parvovirus genome: nucleotide sequence of H-1 and mapping of its genes by hybrid-arrested translation.</title>
        <authorList>
            <person name="Rhode S.L. III"/>
            <person name="Paradiso P.R."/>
        </authorList>
    </citation>
    <scope>NUCLEOTIDE SEQUENCE [GENOMIC DNA]</scope>
</reference>
<comment type="function">
    <text evidence="2">Multifunctional protein which displays endonuclease and helicase activities required for initiating and directing viral DNA replication. Also plays a role in viral packaging and transactivation of several promoters. Binds site-specifically to 2-3 approximate tandem copies within the origins of replication (Ori), unwinds this hairpin region and nicks one DNA strand thereby initiating the rolling circle replication (RCR). Cooperatively binds Ori with host PIF and probably other host factors, which activate the nickase function of NS1. Becomes covalently attached to the 5' end of the nick and provides a 3'OH for priming DNA synthesis. The helicase activity unwinds DNA in a 3'-5' direction on the longer strand. Inhibits the host cell cycle during the G1/S transition, the S-phase, and the G2/M transition. These arrests may provide essential cellular factors for viral DNA replication. Promotes apoptosis in host cell.</text>
</comment>
<comment type="catalytic activity">
    <reaction evidence="2">
        <text>ATP + H2O = ADP + phosphate + H(+)</text>
        <dbReference type="Rhea" id="RHEA:13065"/>
        <dbReference type="ChEBI" id="CHEBI:15377"/>
        <dbReference type="ChEBI" id="CHEBI:15378"/>
        <dbReference type="ChEBI" id="CHEBI:30616"/>
        <dbReference type="ChEBI" id="CHEBI:43474"/>
        <dbReference type="ChEBI" id="CHEBI:456216"/>
        <dbReference type="EC" id="3.6.4.12"/>
    </reaction>
</comment>
<comment type="cofactor">
    <cofactor evidence="2">
        <name>Mg(2+)</name>
        <dbReference type="ChEBI" id="CHEBI:18420"/>
    </cofactor>
    <text evidence="2">The endonuclease active site can probably bind other divalent cations.</text>
</comment>
<comment type="subunit">
    <text evidence="3">Homooligomer; when bound to DNA.</text>
</comment>
<comment type="subcellular location">
    <subcellularLocation>
        <location evidence="1">Host nucleus</location>
    </subcellularLocation>
</comment>
<comment type="domain">
    <text evidence="2 3">In the N-terminus, the endonuclease region is involved in binding to the origin of replication. In the middle, there are the ATPase and helicase activities (By similarity). The C-terminus probably contains a transactivation domain (By similarity).</text>
</comment>
<comment type="PTM">
    <text evidence="2">Phosphorylated.</text>
</comment>
<comment type="similarity">
    <text evidence="7">Belongs to the parvoviruses initiator protein NS1 family.</text>
</comment>
<evidence type="ECO:0000250" key="1">
    <source>
        <dbReference type="UniProtKB" id="D0EZM8"/>
    </source>
</evidence>
<evidence type="ECO:0000250" key="2">
    <source>
        <dbReference type="UniProtKB" id="P03134"/>
    </source>
</evidence>
<evidence type="ECO:0000250" key="3">
    <source>
        <dbReference type="UniProtKB" id="Q9PZT1"/>
    </source>
</evidence>
<evidence type="ECO:0000255" key="4">
    <source>
        <dbReference type="PROSITE-ProRule" id="PRU00551"/>
    </source>
</evidence>
<evidence type="ECO:0000255" key="5">
    <source>
        <dbReference type="PROSITE-ProRule" id="PRU01366"/>
    </source>
</evidence>
<evidence type="ECO:0000256" key="6">
    <source>
        <dbReference type="SAM" id="MobiDB-lite"/>
    </source>
</evidence>
<evidence type="ECO:0000305" key="7"/>
<protein>
    <recommendedName>
        <fullName evidence="2">Initiator protein NS1</fullName>
        <shortName>NS1</shortName>
        <ecNumber evidence="3">3.1.21.-</ecNumber>
        <ecNumber evidence="3">3.6.4.12</ecNumber>
    </recommendedName>
    <alternativeName>
        <fullName>NCVP1</fullName>
    </alternativeName>
    <alternativeName>
        <fullName>Non-capsid protein NS-1</fullName>
    </alternativeName>
    <alternativeName>
        <fullName>Non-structural protein 1</fullName>
    </alternativeName>
    <alternativeName>
        <fullName>Non-structural protein NS1</fullName>
    </alternativeName>
</protein>
<organism>
    <name type="scientific">Hamster parvovirus H1</name>
    <dbReference type="NCBI Taxonomy" id="10799"/>
    <lineage>
        <taxon>Viruses</taxon>
        <taxon>Monodnaviria</taxon>
        <taxon>Shotokuvirae</taxon>
        <taxon>Cossaviricota</taxon>
        <taxon>Quintoviricetes</taxon>
        <taxon>Piccovirales</taxon>
        <taxon>Parvoviridae</taxon>
        <taxon>Parvovirinae</taxon>
        <taxon>Protoparvovirus</taxon>
        <taxon>Protoparvovirus rodent1</taxon>
    </lineage>
</organism>
<dbReference type="EC" id="3.1.21.-" evidence="3"/>
<dbReference type="EC" id="3.6.4.12" evidence="3"/>
<dbReference type="EMBL" id="X01457">
    <property type="protein sequence ID" value="CAA25689.1"/>
    <property type="molecule type" value="Genomic_DNA"/>
</dbReference>
<dbReference type="PIR" id="A03695">
    <property type="entry name" value="UYPVV1"/>
</dbReference>
<dbReference type="SMR" id="P03133"/>
<dbReference type="Proteomes" id="UP000007897">
    <property type="component" value="Genome"/>
</dbReference>
<dbReference type="GO" id="GO:0042025">
    <property type="term" value="C:host cell nucleus"/>
    <property type="evidence" value="ECO:0007669"/>
    <property type="project" value="UniProtKB-SubCell"/>
</dbReference>
<dbReference type="GO" id="GO:0005524">
    <property type="term" value="F:ATP binding"/>
    <property type="evidence" value="ECO:0007669"/>
    <property type="project" value="UniProtKB-KW"/>
</dbReference>
<dbReference type="GO" id="GO:0016887">
    <property type="term" value="F:ATP hydrolysis activity"/>
    <property type="evidence" value="ECO:0007669"/>
    <property type="project" value="RHEA"/>
</dbReference>
<dbReference type="GO" id="GO:0003677">
    <property type="term" value="F:DNA binding"/>
    <property type="evidence" value="ECO:0007669"/>
    <property type="project" value="UniProtKB-KW"/>
</dbReference>
<dbReference type="GO" id="GO:0004519">
    <property type="term" value="F:endonuclease activity"/>
    <property type="evidence" value="ECO:0007669"/>
    <property type="project" value="UniProtKB-KW"/>
</dbReference>
<dbReference type="GO" id="GO:0004386">
    <property type="term" value="F:helicase activity"/>
    <property type="evidence" value="ECO:0007669"/>
    <property type="project" value="UniProtKB-KW"/>
</dbReference>
<dbReference type="GO" id="GO:0046872">
    <property type="term" value="F:metal ion binding"/>
    <property type="evidence" value="ECO:0007669"/>
    <property type="project" value="UniProtKB-KW"/>
</dbReference>
<dbReference type="GO" id="GO:0006260">
    <property type="term" value="P:DNA replication"/>
    <property type="evidence" value="ECO:0007669"/>
    <property type="project" value="UniProtKB-KW"/>
</dbReference>
<dbReference type="GO" id="GO:0039592">
    <property type="term" value="P:symbiont-mediated arrest of host cell cycle during G2/M transition"/>
    <property type="evidence" value="ECO:0007669"/>
    <property type="project" value="UniProtKB-KW"/>
</dbReference>
<dbReference type="GO" id="GO:0052150">
    <property type="term" value="P:symbiont-mediated perturbation of host apoptosis"/>
    <property type="evidence" value="ECO:0007669"/>
    <property type="project" value="UniProtKB-KW"/>
</dbReference>
<dbReference type="GO" id="GO:0039645">
    <property type="term" value="P:symbiont-mediated perturbation of host cell cycle G1/S transition checkpoint"/>
    <property type="evidence" value="ECO:0007669"/>
    <property type="project" value="UniProtKB-KW"/>
</dbReference>
<dbReference type="GO" id="GO:0039693">
    <property type="term" value="P:viral DNA genome replication"/>
    <property type="evidence" value="ECO:0007669"/>
    <property type="project" value="UniProtKB-KW"/>
</dbReference>
<dbReference type="FunFam" id="3.40.50.300:FF:003160">
    <property type="entry name" value="Initiator protein NS1"/>
    <property type="match status" value="1"/>
</dbReference>
<dbReference type="Gene3D" id="3.40.1310.20">
    <property type="match status" value="1"/>
</dbReference>
<dbReference type="Gene3D" id="3.40.50.300">
    <property type="entry name" value="P-loop containing nucleotide triphosphate hydrolases"/>
    <property type="match status" value="1"/>
</dbReference>
<dbReference type="InterPro" id="IPR014015">
    <property type="entry name" value="Helicase_SF3_DNA-vir"/>
</dbReference>
<dbReference type="InterPro" id="IPR027417">
    <property type="entry name" value="P-loop_NTPase"/>
</dbReference>
<dbReference type="InterPro" id="IPR021972">
    <property type="entry name" value="Parvovirus_NS1_C"/>
</dbReference>
<dbReference type="InterPro" id="IPR001257">
    <property type="entry name" value="Parvovirus_NS1_helicase"/>
</dbReference>
<dbReference type="InterPro" id="IPR021076">
    <property type="entry name" value="Parvovirus_NS1_N"/>
</dbReference>
<dbReference type="InterPro" id="IPR049901">
    <property type="entry name" value="PV_NS1-NUC"/>
</dbReference>
<dbReference type="Pfam" id="PF12117">
    <property type="entry name" value="NS1_C"/>
    <property type="match status" value="1"/>
</dbReference>
<dbReference type="Pfam" id="PF01057">
    <property type="entry name" value="Parvo_NS1"/>
    <property type="match status" value="1"/>
</dbReference>
<dbReference type="Pfam" id="PF12433">
    <property type="entry name" value="PV_NSP1"/>
    <property type="match status" value="1"/>
</dbReference>
<dbReference type="SUPFAM" id="SSF55464">
    <property type="entry name" value="Origin of replication-binding domain, RBD-like"/>
    <property type="match status" value="1"/>
</dbReference>
<dbReference type="SUPFAM" id="SSF52540">
    <property type="entry name" value="P-loop containing nucleoside triphosphate hydrolases"/>
    <property type="match status" value="1"/>
</dbReference>
<dbReference type="PROSITE" id="PS52022">
    <property type="entry name" value="PV_NS1_NUC"/>
    <property type="match status" value="1"/>
</dbReference>
<dbReference type="PROSITE" id="PS51206">
    <property type="entry name" value="SF3_HELICASE_1"/>
    <property type="match status" value="1"/>
</dbReference>
<proteinExistence type="inferred from homology"/>
<name>NS1_PAVHH</name>
<accession>P03133</accession>